<reference key="1">
    <citation type="journal article" date="2016" name="J. Am. Chem. Soc.">
        <title>Phenalenone polyketide cyclization catalyzed by fungal polyketide synthase and flavin-dependent monooxygenase.</title>
        <authorList>
            <person name="Gao S.S."/>
            <person name="Duan A."/>
            <person name="Xu W."/>
            <person name="Yu P."/>
            <person name="Hang L."/>
            <person name="Houk K.N."/>
            <person name="Tang Y."/>
        </authorList>
    </citation>
    <scope>NUCLEOTIDE SEQUENCE [GENOMIC DNA]</scope>
    <scope>FUNCTION</scope>
    <scope>CATALYTIC ACTIVITY</scope>
    <scope>DISRUPTION PHENOTYPE</scope>
    <scope>PATHWAY</scope>
    <source>
        <strain>ATCC 10118 / CBS 336.48 / NBRC 31747 / NRRL 1040</strain>
    </source>
</reference>
<reference key="2">
    <citation type="journal article" date="2017" name="J. Am. Chem. Soc.">
        <title>Enzyme-catalyzed intramolecular enantioselective hydroalkoxylation.</title>
        <authorList>
            <person name="Gao S.S."/>
            <person name="Garcia-Borras M."/>
            <person name="Barber J.S."/>
            <person name="Hai Y."/>
            <person name="Duan A."/>
            <person name="Garg N.K."/>
            <person name="Houk K.N."/>
            <person name="Tang Y."/>
        </authorList>
    </citation>
    <scope>FUNCTION</scope>
    <scope>CATALYTIC ACTIVITY</scope>
    <scope>PATHWAY</scope>
</reference>
<gene>
    <name evidence="5" type="primary">phnB</name>
</gene>
<feature type="chain" id="PRO_0000446162" description="FAD-dependent monooxygenase phnB">
    <location>
        <begin position="1"/>
        <end position="409"/>
    </location>
</feature>
<feature type="binding site" evidence="2">
    <location>
        <position position="35"/>
    </location>
    <ligand>
        <name>FAD</name>
        <dbReference type="ChEBI" id="CHEBI:57692"/>
    </ligand>
</feature>
<feature type="binding site" evidence="2">
    <location>
        <position position="50"/>
    </location>
    <ligand>
        <name>FAD</name>
        <dbReference type="ChEBI" id="CHEBI:57692"/>
    </ligand>
</feature>
<feature type="binding site" evidence="2">
    <location>
        <position position="110"/>
    </location>
    <ligand>
        <name>FAD</name>
        <dbReference type="ChEBI" id="CHEBI:57692"/>
    </ligand>
</feature>
<feature type="binding site" evidence="2">
    <location>
        <position position="311"/>
    </location>
    <ligand>
        <name>FAD</name>
        <dbReference type="ChEBI" id="CHEBI:57692"/>
    </ligand>
</feature>
<sequence>MTSPQTHVIVIGAGITGLLTCQGLKKAGISYSCFERDTSLNSRSNEWTMAIHWSLPLLAEILPTEVRAKLATIACNPVAGIHSGLYPIIHGETGDLITGVPYKDGLRVPRSKMRALCAEGIDVQYGKTLADVAFNESGNGVVATFTDGTLVAGTMIVGADGPRSRVRETAMGDAKLAATTSFPIFHTNMTVCYNDAEKAKFVREKYPTSYLALSERSFHAFQSISSMPDGPDHPETWVFHMAMAWMGQSDNAMCYAERLALVKSKAEGLGEPARSAFMWMPEETEVHKADISYWISQPWNNRDGRLTLVGDAAHPMPPYRGQGLNHCICDVSKLLAGLAGVHSGSTTLSDAIQEFEAEMIPRGKEEVTCSVENGKMLHDWNKIQESPVFKRGFLPMDGHDTRKEIAQAS</sequence>
<evidence type="ECO:0000250" key="1">
    <source>
        <dbReference type="UniProtKB" id="A6T923"/>
    </source>
</evidence>
<evidence type="ECO:0000250" key="2">
    <source>
        <dbReference type="UniProtKB" id="B8M9J8"/>
    </source>
</evidence>
<evidence type="ECO:0000269" key="3">
    <source>
    </source>
</evidence>
<evidence type="ECO:0000269" key="4">
    <source>
    </source>
</evidence>
<evidence type="ECO:0000303" key="5">
    <source>
    </source>
</evidence>
<evidence type="ECO:0000305" key="6"/>
<keyword id="KW-0274">FAD</keyword>
<keyword id="KW-0285">Flavoprotein</keyword>
<keyword id="KW-0503">Monooxygenase</keyword>
<keyword id="KW-0560">Oxidoreductase</keyword>
<name>PHNB_PENHR</name>
<dbReference type="EC" id="1.-.-.-" evidence="3 4"/>
<dbReference type="EMBL" id="KU641627">
    <property type="protein sequence ID" value="AMP46752.1"/>
    <property type="molecule type" value="Genomic_DNA"/>
</dbReference>
<dbReference type="SMR" id="A0A142C7A0"/>
<dbReference type="GO" id="GO:0071949">
    <property type="term" value="F:FAD binding"/>
    <property type="evidence" value="ECO:0007669"/>
    <property type="project" value="InterPro"/>
</dbReference>
<dbReference type="GO" id="GO:0004497">
    <property type="term" value="F:monooxygenase activity"/>
    <property type="evidence" value="ECO:0007669"/>
    <property type="project" value="UniProtKB-KW"/>
</dbReference>
<dbReference type="Gene3D" id="3.50.50.60">
    <property type="entry name" value="FAD/NAD(P)-binding domain"/>
    <property type="match status" value="1"/>
</dbReference>
<dbReference type="InterPro" id="IPR002938">
    <property type="entry name" value="FAD-bd"/>
</dbReference>
<dbReference type="InterPro" id="IPR036188">
    <property type="entry name" value="FAD/NAD-bd_sf"/>
</dbReference>
<dbReference type="PANTHER" id="PTHR47178:SF2">
    <property type="entry name" value="FAD-BINDING DOMAIN-CONTAINING PROTEIN"/>
    <property type="match status" value="1"/>
</dbReference>
<dbReference type="PANTHER" id="PTHR47178">
    <property type="entry name" value="MONOOXYGENASE, FAD-BINDING"/>
    <property type="match status" value="1"/>
</dbReference>
<dbReference type="Pfam" id="PF01494">
    <property type="entry name" value="FAD_binding_3"/>
    <property type="match status" value="1"/>
</dbReference>
<dbReference type="PRINTS" id="PR00420">
    <property type="entry name" value="RNGMNOXGNASE"/>
</dbReference>
<dbReference type="SUPFAM" id="SSF51905">
    <property type="entry name" value="FAD/NAD(P)-binding domain"/>
    <property type="match status" value="1"/>
</dbReference>
<protein>
    <recommendedName>
        <fullName evidence="5">FAD-dependent monooxygenase phnB</fullName>
        <shortName>FMO phnB</shortName>
        <ecNumber evidence="3 4">1.-.-.-</ecNumber>
    </recommendedName>
    <alternativeName>
        <fullName evidence="5">Phenalenone biosynthesis cluster protein B</fullName>
    </alternativeName>
</protein>
<proteinExistence type="evidence at protein level"/>
<accession>A0A142C7A0</accession>
<comment type="function">
    <text evidence="3 4">FAD-dependent monooxygenase; part of the gene cluster that mediates the biosynthesis of phenalenones such as herqueinone, compounds that have been reported to treat tumors, bacterial infections and/or mycoses, and rheumatic diseases (PubMed:26978228). The non-reducing polyketide synthase phnA synthesizes the heptaketide backbone and cyclizes it into the angular, hemiketal-containing naphtho-gamma-pyrone prephenalenone. The product template (PT) domain of phnA catalyzes only the C4-C9 aldol condensation, which is unprecedented among known PT domains (PubMed:26978228, PubMed:28240554). The transformation of prephenalenone to phenalenones requires an FAD-dependent monooxygenase phnB, which catalyzes the C2 aromatic hydroxylation of prephenalenone and ring opening of the gamma-pyrone ring simultaneously (PubMed:26978228, PubMed:28240554). Subsequent intramolecular deprotonation of C3 phenolic oxygen accelerates phenalenone ring closure to yield the tricyclic phenalenone core with a C2 hydroxylation (PubMed:26978228, PubMed:28240554). The prenyltransferase phnF further catalyzes reverse C-prenylation of phenalenone by direct electrophilic substitution at C6, or possibly via first a forward O-prenylation of a neighboring phenol in phenalenone, followed by a Claisen rearrangement (PubMed:28240554). The hydroalkoxylation enzyme phnH catalyzes the 5-exo-trig cyclization via acid catalysis after the spontaneous deprotonation of 7-OH, which leads to the formation of the dihydrobenzofuran atrovenetin (PubMed:28240554). Atrovenetin is further converted to deoxyherqueinone by the O-methyltransferase phnC which can methylate C2-OH to stabilize the northern portion of the phenalenone core (PubMed:28240554). Finally, the oxidoreductase phnG converts deoxyherqueinone to herqueinone via C6 hydroxylation (PubMed:28240554).</text>
</comment>
<comment type="catalytic activity">
    <reaction evidence="3 4">
        <text>3,6,7,9-tetrahydroxy-3-methyl-2,3-dihydro-1H-naphtho[2,1-b]pyran-1-one + NADPH + O2 + H(+) = 2,3,4,7,9-pentahydroxy-6-methyl-1H-phenalen-1-one + NADP(+) + 2 H2O</text>
        <dbReference type="Rhea" id="RHEA:13461"/>
        <dbReference type="ChEBI" id="CHEBI:15377"/>
        <dbReference type="ChEBI" id="CHEBI:15378"/>
        <dbReference type="ChEBI" id="CHEBI:15379"/>
        <dbReference type="ChEBI" id="CHEBI:57783"/>
        <dbReference type="ChEBI" id="CHEBI:58349"/>
        <dbReference type="ChEBI" id="CHEBI:142788"/>
        <dbReference type="ChEBI" id="CHEBI:142802"/>
    </reaction>
    <physiologicalReaction direction="left-to-right" evidence="3 4">
        <dbReference type="Rhea" id="RHEA:13462"/>
    </physiologicalReaction>
</comment>
<comment type="cofactor">
    <cofactor evidence="1">
        <name>FAD</name>
        <dbReference type="ChEBI" id="CHEBI:57692"/>
    </cofactor>
</comment>
<comment type="pathway">
    <text evidence="3 4">Secondary metabolite biosynthesis.</text>
</comment>
<comment type="disruption phenotype">
    <text evidence="3">Loses the ability to produce phenalenone, and accumulates prephenalenone as the predominant product.</text>
</comment>
<comment type="similarity">
    <text evidence="6">Belongs to the paxM FAD-dependent monooxygenase family.</text>
</comment>
<organism>
    <name type="scientific">Penicillium herquei</name>
    <dbReference type="NCBI Taxonomy" id="69774"/>
    <lineage>
        <taxon>Eukaryota</taxon>
        <taxon>Fungi</taxon>
        <taxon>Dikarya</taxon>
        <taxon>Ascomycota</taxon>
        <taxon>Pezizomycotina</taxon>
        <taxon>Eurotiomycetes</taxon>
        <taxon>Eurotiomycetidae</taxon>
        <taxon>Eurotiales</taxon>
        <taxon>Aspergillaceae</taxon>
        <taxon>Penicillium</taxon>
    </lineage>
</organism>